<evidence type="ECO:0000255" key="1">
    <source>
        <dbReference type="HAMAP-Rule" id="MF_01338"/>
    </source>
</evidence>
<keyword id="KW-0007">Acetylation</keyword>
<keyword id="KW-0113">Calvin cycle</keyword>
<keyword id="KW-0120">Carbon dioxide fixation</keyword>
<keyword id="KW-0150">Chloroplast</keyword>
<keyword id="KW-1015">Disulfide bond</keyword>
<keyword id="KW-0456">Lyase</keyword>
<keyword id="KW-0460">Magnesium</keyword>
<keyword id="KW-0479">Metal-binding</keyword>
<keyword id="KW-0488">Methylation</keyword>
<keyword id="KW-0503">Monooxygenase</keyword>
<keyword id="KW-0560">Oxidoreductase</keyword>
<keyword id="KW-0601">Photorespiration</keyword>
<keyword id="KW-0602">Photosynthesis</keyword>
<keyword id="KW-0934">Plastid</keyword>
<name>RBL_GALCO</name>
<proteinExistence type="inferred from homology"/>
<reference key="1">
    <citation type="journal article" date="1995" name="J. Mol. Evol.">
        <title>Comparison of the evolution of ribulose-1, 5-biphosphate carboxylase (rbcL) and atpB-rbcL noncoding spacer sequences in a recent plant group, the tribe Rubieae (Rubiaceae).</title>
        <authorList>
            <person name="Manen J.F."/>
            <person name="Natali A."/>
        </authorList>
    </citation>
    <scope>NUCLEOTIDE SEQUENCE [GENOMIC DNA]</scope>
</reference>
<comment type="function">
    <text evidence="1">RuBisCO catalyzes two reactions: the carboxylation of D-ribulose 1,5-bisphosphate, the primary event in carbon dioxide fixation, as well as the oxidative fragmentation of the pentose substrate in the photorespiration process. Both reactions occur simultaneously and in competition at the same active site.</text>
</comment>
<comment type="catalytic activity">
    <reaction evidence="1">
        <text>2 (2R)-3-phosphoglycerate + 2 H(+) = D-ribulose 1,5-bisphosphate + CO2 + H2O</text>
        <dbReference type="Rhea" id="RHEA:23124"/>
        <dbReference type="ChEBI" id="CHEBI:15377"/>
        <dbReference type="ChEBI" id="CHEBI:15378"/>
        <dbReference type="ChEBI" id="CHEBI:16526"/>
        <dbReference type="ChEBI" id="CHEBI:57870"/>
        <dbReference type="ChEBI" id="CHEBI:58272"/>
        <dbReference type="EC" id="4.1.1.39"/>
    </reaction>
</comment>
<comment type="catalytic activity">
    <reaction evidence="1">
        <text>D-ribulose 1,5-bisphosphate + O2 = 2-phosphoglycolate + (2R)-3-phosphoglycerate + 2 H(+)</text>
        <dbReference type="Rhea" id="RHEA:36631"/>
        <dbReference type="ChEBI" id="CHEBI:15378"/>
        <dbReference type="ChEBI" id="CHEBI:15379"/>
        <dbReference type="ChEBI" id="CHEBI:57870"/>
        <dbReference type="ChEBI" id="CHEBI:58033"/>
        <dbReference type="ChEBI" id="CHEBI:58272"/>
    </reaction>
</comment>
<comment type="cofactor">
    <cofactor evidence="1">
        <name>Mg(2+)</name>
        <dbReference type="ChEBI" id="CHEBI:18420"/>
    </cofactor>
    <text evidence="1">Binds 1 Mg(2+) ion per subunit.</text>
</comment>
<comment type="subunit">
    <text evidence="1">Heterohexadecamer of 8 large chains and 8 small chains; disulfide-linked. The disulfide link is formed within the large subunit homodimers.</text>
</comment>
<comment type="subcellular location">
    <subcellularLocation>
        <location>Plastid</location>
        <location>Chloroplast</location>
    </subcellularLocation>
</comment>
<comment type="PTM">
    <text evidence="1">The disulfide bond which can form in the large chain dimeric partners within the hexadecamer appears to be associated with oxidative stress and protein turnover.</text>
</comment>
<comment type="miscellaneous">
    <text evidence="1">The basic functional RuBisCO is composed of a large chain homodimer in a 'head-to-tail' conformation. In form I RuBisCO this homodimer is arranged in a barrel-like tetramer with the small subunits forming a tetrameric 'cap' on each end of the 'barrel'.</text>
</comment>
<comment type="similarity">
    <text evidence="1">Belongs to the RuBisCO large chain family. Type I subfamily.</text>
</comment>
<dbReference type="EC" id="4.1.1.39" evidence="1"/>
<dbReference type="EMBL" id="X81096">
    <property type="protein sequence ID" value="CAA57002.1"/>
    <property type="molecule type" value="Genomic_DNA"/>
</dbReference>
<dbReference type="PIR" id="S47228">
    <property type="entry name" value="S47228"/>
</dbReference>
<dbReference type="SMR" id="Q32271"/>
<dbReference type="GO" id="GO:0009507">
    <property type="term" value="C:chloroplast"/>
    <property type="evidence" value="ECO:0007669"/>
    <property type="project" value="UniProtKB-SubCell"/>
</dbReference>
<dbReference type="GO" id="GO:0000287">
    <property type="term" value="F:magnesium ion binding"/>
    <property type="evidence" value="ECO:0007669"/>
    <property type="project" value="InterPro"/>
</dbReference>
<dbReference type="GO" id="GO:0004497">
    <property type="term" value="F:monooxygenase activity"/>
    <property type="evidence" value="ECO:0007669"/>
    <property type="project" value="UniProtKB-KW"/>
</dbReference>
<dbReference type="GO" id="GO:0016984">
    <property type="term" value="F:ribulose-bisphosphate carboxylase activity"/>
    <property type="evidence" value="ECO:0007669"/>
    <property type="project" value="UniProtKB-EC"/>
</dbReference>
<dbReference type="GO" id="GO:0009853">
    <property type="term" value="P:photorespiration"/>
    <property type="evidence" value="ECO:0007669"/>
    <property type="project" value="UniProtKB-KW"/>
</dbReference>
<dbReference type="GO" id="GO:0019253">
    <property type="term" value="P:reductive pentose-phosphate cycle"/>
    <property type="evidence" value="ECO:0007669"/>
    <property type="project" value="UniProtKB-KW"/>
</dbReference>
<dbReference type="CDD" id="cd08212">
    <property type="entry name" value="RuBisCO_large_I"/>
    <property type="match status" value="1"/>
</dbReference>
<dbReference type="FunFam" id="3.20.20.110:FF:000003">
    <property type="entry name" value="Ribulose bisphosphate carboxylase large chain"/>
    <property type="match status" value="1"/>
</dbReference>
<dbReference type="FunFam" id="3.30.70.150:FF:000001">
    <property type="entry name" value="Ribulose bisphosphate carboxylase large chain"/>
    <property type="match status" value="1"/>
</dbReference>
<dbReference type="Gene3D" id="3.20.20.110">
    <property type="entry name" value="Ribulose bisphosphate carboxylase, large subunit, C-terminal domain"/>
    <property type="match status" value="1"/>
</dbReference>
<dbReference type="Gene3D" id="3.30.70.150">
    <property type="entry name" value="RuBisCO large subunit, N-terminal domain"/>
    <property type="match status" value="1"/>
</dbReference>
<dbReference type="HAMAP" id="MF_01338">
    <property type="entry name" value="RuBisCO_L_type1"/>
    <property type="match status" value="1"/>
</dbReference>
<dbReference type="InterPro" id="IPR033966">
    <property type="entry name" value="RuBisCO"/>
</dbReference>
<dbReference type="InterPro" id="IPR020878">
    <property type="entry name" value="RuBisCo_large_chain_AS"/>
</dbReference>
<dbReference type="InterPro" id="IPR000685">
    <property type="entry name" value="RuBisCO_lsu_C"/>
</dbReference>
<dbReference type="InterPro" id="IPR036376">
    <property type="entry name" value="RuBisCO_lsu_C_sf"/>
</dbReference>
<dbReference type="InterPro" id="IPR017443">
    <property type="entry name" value="RuBisCO_lsu_fd_N"/>
</dbReference>
<dbReference type="InterPro" id="IPR036422">
    <property type="entry name" value="RuBisCO_lsu_N_sf"/>
</dbReference>
<dbReference type="InterPro" id="IPR020888">
    <property type="entry name" value="RuBisCO_lsuI"/>
</dbReference>
<dbReference type="NCBIfam" id="NF003252">
    <property type="entry name" value="PRK04208.1"/>
    <property type="match status" value="1"/>
</dbReference>
<dbReference type="PANTHER" id="PTHR42704">
    <property type="entry name" value="RIBULOSE BISPHOSPHATE CARBOXYLASE"/>
    <property type="match status" value="1"/>
</dbReference>
<dbReference type="PANTHER" id="PTHR42704:SF15">
    <property type="entry name" value="RIBULOSE BISPHOSPHATE CARBOXYLASE LARGE CHAIN"/>
    <property type="match status" value="1"/>
</dbReference>
<dbReference type="Pfam" id="PF00016">
    <property type="entry name" value="RuBisCO_large"/>
    <property type="match status" value="1"/>
</dbReference>
<dbReference type="Pfam" id="PF02788">
    <property type="entry name" value="RuBisCO_large_N"/>
    <property type="match status" value="1"/>
</dbReference>
<dbReference type="SFLD" id="SFLDG01052">
    <property type="entry name" value="RuBisCO"/>
    <property type="match status" value="1"/>
</dbReference>
<dbReference type="SFLD" id="SFLDS00014">
    <property type="entry name" value="RuBisCO"/>
    <property type="match status" value="1"/>
</dbReference>
<dbReference type="SFLD" id="SFLDG00301">
    <property type="entry name" value="RuBisCO-like_proteins"/>
    <property type="match status" value="1"/>
</dbReference>
<dbReference type="SUPFAM" id="SSF51649">
    <property type="entry name" value="RuBisCo, C-terminal domain"/>
    <property type="match status" value="1"/>
</dbReference>
<dbReference type="SUPFAM" id="SSF54966">
    <property type="entry name" value="RuBisCO, large subunit, small (N-terminal) domain"/>
    <property type="match status" value="1"/>
</dbReference>
<dbReference type="PROSITE" id="PS00157">
    <property type="entry name" value="RUBISCO_LARGE"/>
    <property type="match status" value="1"/>
</dbReference>
<geneLocation type="chloroplast"/>
<accession>Q32271</accession>
<sequence length="453" mass="50279">MSPQTETKAGVGFKAGVKEYKLTYYTPEYETKDTDILAAFRVTPQPGVPPEERGAAVAAESSTGTWTTVWTDGLTSLDRYKGRCYHIEPVPGEEDQFIAYVAYPLDLFEEGSVTNMFTSIVGNVFGFKALRALRLEDLRIPVAYVKTFQGPPHGIQVERDKLNKYGRPLLGCTIKPKLGLSAKNYGRAVYECLRGGLDFTKDDENVNSQPFMRWRDRFLFCAEAIYKSQAETGEIKGHYLNATAGTCEEMIKRAVFARELGVPIVMHDYLTGGFTANTSLSHYCRDNGLLLHIHRAMHAVIDRQKNHGMHFRVLAKALRMSGGDHIHSGTVVGKLEGERDITLGFVDLLRDDYIEKDRSRGIYFTQDWVSLPGVLPVASRGIHVWHMPALTEIFGDDSVLQFGGGTLGHPWGNAPGAVANRVALEACVKARNEGRDLASEGGEIIREACKWSP</sequence>
<protein>
    <recommendedName>
        <fullName evidence="1">Ribulose bisphosphate carboxylase large chain</fullName>
        <shortName evidence="1">RuBisCO large subunit</shortName>
        <ecNumber evidence="1">4.1.1.39</ecNumber>
    </recommendedName>
</protein>
<gene>
    <name evidence="1" type="primary">rbcL</name>
</gene>
<feature type="propeptide" id="PRO_0000031229" evidence="1">
    <location>
        <begin position="1"/>
        <end position="2"/>
    </location>
</feature>
<feature type="chain" id="PRO_0000031230" description="Ribulose bisphosphate carboxylase large chain">
    <location>
        <begin position="3"/>
        <end position="453" status="greater than"/>
    </location>
</feature>
<feature type="active site" description="Proton acceptor" evidence="1">
    <location>
        <position position="175"/>
    </location>
</feature>
<feature type="active site" description="Proton acceptor" evidence="1">
    <location>
        <position position="294"/>
    </location>
</feature>
<feature type="binding site" description="in homodimeric partner" evidence="1">
    <location>
        <position position="123"/>
    </location>
    <ligand>
        <name>substrate</name>
    </ligand>
</feature>
<feature type="binding site" evidence="1">
    <location>
        <position position="173"/>
    </location>
    <ligand>
        <name>substrate</name>
    </ligand>
</feature>
<feature type="binding site" evidence="1">
    <location>
        <position position="177"/>
    </location>
    <ligand>
        <name>substrate</name>
    </ligand>
</feature>
<feature type="binding site" description="via carbamate group" evidence="1">
    <location>
        <position position="201"/>
    </location>
    <ligand>
        <name>Mg(2+)</name>
        <dbReference type="ChEBI" id="CHEBI:18420"/>
    </ligand>
</feature>
<feature type="binding site" evidence="1">
    <location>
        <position position="203"/>
    </location>
    <ligand>
        <name>Mg(2+)</name>
        <dbReference type="ChEBI" id="CHEBI:18420"/>
    </ligand>
</feature>
<feature type="binding site" evidence="1">
    <location>
        <position position="204"/>
    </location>
    <ligand>
        <name>Mg(2+)</name>
        <dbReference type="ChEBI" id="CHEBI:18420"/>
    </ligand>
</feature>
<feature type="binding site" evidence="1">
    <location>
        <position position="295"/>
    </location>
    <ligand>
        <name>substrate</name>
    </ligand>
</feature>
<feature type="binding site" evidence="1">
    <location>
        <position position="327"/>
    </location>
    <ligand>
        <name>substrate</name>
    </ligand>
</feature>
<feature type="binding site" evidence="1">
    <location>
        <position position="379"/>
    </location>
    <ligand>
        <name>substrate</name>
    </ligand>
</feature>
<feature type="site" description="Transition state stabilizer" evidence="1">
    <location>
        <position position="334"/>
    </location>
</feature>
<feature type="modified residue" description="N-acetylproline" evidence="1">
    <location>
        <position position="3"/>
    </location>
</feature>
<feature type="modified residue" description="N6,N6,N6-trimethyllysine" evidence="1">
    <location>
        <position position="14"/>
    </location>
</feature>
<feature type="modified residue" description="N6-carboxylysine" evidence="1">
    <location>
        <position position="201"/>
    </location>
</feature>
<feature type="disulfide bond" description="Interchain; in linked form" evidence="1">
    <location>
        <position position="247"/>
    </location>
</feature>
<feature type="non-terminal residue">
    <location>
        <position position="453"/>
    </location>
</feature>
<organism>
    <name type="scientific">Galium corsicum</name>
    <dbReference type="NCBI Taxonomy" id="29789"/>
    <lineage>
        <taxon>Eukaryota</taxon>
        <taxon>Viridiplantae</taxon>
        <taxon>Streptophyta</taxon>
        <taxon>Embryophyta</taxon>
        <taxon>Tracheophyta</taxon>
        <taxon>Spermatophyta</taxon>
        <taxon>Magnoliopsida</taxon>
        <taxon>eudicotyledons</taxon>
        <taxon>Gunneridae</taxon>
        <taxon>Pentapetalae</taxon>
        <taxon>asterids</taxon>
        <taxon>lamiids</taxon>
        <taxon>Gentianales</taxon>
        <taxon>Rubiaceae</taxon>
        <taxon>Rubioideae</taxon>
        <taxon>Rubieae</taxon>
        <taxon>Galium</taxon>
    </lineage>
</organism>